<dbReference type="EC" id="7.1.1.-" evidence="1"/>
<dbReference type="EMBL" id="CP000319">
    <property type="protein sequence ID" value="ABE63010.1"/>
    <property type="molecule type" value="Genomic_DNA"/>
</dbReference>
<dbReference type="RefSeq" id="WP_011510687.1">
    <property type="nucleotide sequence ID" value="NC_007964.1"/>
</dbReference>
<dbReference type="SMR" id="Q1QL87"/>
<dbReference type="STRING" id="323097.Nham_2218"/>
<dbReference type="KEGG" id="nha:Nham_2218"/>
<dbReference type="eggNOG" id="COG0649">
    <property type="taxonomic scope" value="Bacteria"/>
</dbReference>
<dbReference type="HOGENOM" id="CLU_015134_1_1_5"/>
<dbReference type="OrthoDB" id="9801496at2"/>
<dbReference type="Proteomes" id="UP000001953">
    <property type="component" value="Chromosome"/>
</dbReference>
<dbReference type="GO" id="GO:0005886">
    <property type="term" value="C:plasma membrane"/>
    <property type="evidence" value="ECO:0007669"/>
    <property type="project" value="UniProtKB-SubCell"/>
</dbReference>
<dbReference type="GO" id="GO:0051287">
    <property type="term" value="F:NAD binding"/>
    <property type="evidence" value="ECO:0007669"/>
    <property type="project" value="InterPro"/>
</dbReference>
<dbReference type="GO" id="GO:0050136">
    <property type="term" value="F:NADH:ubiquinone reductase (non-electrogenic) activity"/>
    <property type="evidence" value="ECO:0007669"/>
    <property type="project" value="UniProtKB-UniRule"/>
</dbReference>
<dbReference type="GO" id="GO:0048038">
    <property type="term" value="F:quinone binding"/>
    <property type="evidence" value="ECO:0007669"/>
    <property type="project" value="UniProtKB-KW"/>
</dbReference>
<dbReference type="FunFam" id="1.10.645.10:FF:000005">
    <property type="entry name" value="NADH-quinone oxidoreductase subunit D"/>
    <property type="match status" value="1"/>
</dbReference>
<dbReference type="Gene3D" id="1.10.645.10">
    <property type="entry name" value="Cytochrome-c3 Hydrogenase, chain B"/>
    <property type="match status" value="1"/>
</dbReference>
<dbReference type="HAMAP" id="MF_01358">
    <property type="entry name" value="NDH1_NuoD"/>
    <property type="match status" value="1"/>
</dbReference>
<dbReference type="InterPro" id="IPR001135">
    <property type="entry name" value="NADH_Q_OxRdtase_suD"/>
</dbReference>
<dbReference type="InterPro" id="IPR014029">
    <property type="entry name" value="NADH_UbQ_OxRdtase_49kDa_CS"/>
</dbReference>
<dbReference type="InterPro" id="IPR022885">
    <property type="entry name" value="NDH1_su_D/H"/>
</dbReference>
<dbReference type="InterPro" id="IPR029014">
    <property type="entry name" value="NiFe-Hase_large"/>
</dbReference>
<dbReference type="NCBIfam" id="TIGR01962">
    <property type="entry name" value="NuoD"/>
    <property type="match status" value="1"/>
</dbReference>
<dbReference type="NCBIfam" id="NF004739">
    <property type="entry name" value="PRK06075.1"/>
    <property type="match status" value="1"/>
</dbReference>
<dbReference type="PANTHER" id="PTHR11993:SF10">
    <property type="entry name" value="NADH DEHYDROGENASE [UBIQUINONE] IRON-SULFUR PROTEIN 2, MITOCHONDRIAL"/>
    <property type="match status" value="1"/>
</dbReference>
<dbReference type="PANTHER" id="PTHR11993">
    <property type="entry name" value="NADH-UBIQUINONE OXIDOREDUCTASE 49 KDA SUBUNIT"/>
    <property type="match status" value="1"/>
</dbReference>
<dbReference type="Pfam" id="PF00346">
    <property type="entry name" value="Complex1_49kDa"/>
    <property type="match status" value="1"/>
</dbReference>
<dbReference type="SUPFAM" id="SSF56762">
    <property type="entry name" value="HydB/Nqo4-like"/>
    <property type="match status" value="1"/>
</dbReference>
<dbReference type="PROSITE" id="PS00535">
    <property type="entry name" value="COMPLEX1_49K"/>
    <property type="match status" value="1"/>
</dbReference>
<protein>
    <recommendedName>
        <fullName evidence="1">NADH-quinone oxidoreductase subunit D 2</fullName>
        <ecNumber evidence="1">7.1.1.-</ecNumber>
    </recommendedName>
    <alternativeName>
        <fullName evidence="1">NADH dehydrogenase I subunit D 2</fullName>
    </alternativeName>
    <alternativeName>
        <fullName evidence="1">NDH-1 subunit D 2</fullName>
    </alternativeName>
</protein>
<gene>
    <name evidence="1" type="primary">nuoD2</name>
    <name type="ordered locus">Nham_2218</name>
</gene>
<accession>Q1QL87</accession>
<name>NUOD2_NITHX</name>
<feature type="chain" id="PRO_0000357873" description="NADH-quinone oxidoreductase subunit D 2">
    <location>
        <begin position="1"/>
        <end position="402"/>
    </location>
</feature>
<reference key="1">
    <citation type="submission" date="2006-03" db="EMBL/GenBank/DDBJ databases">
        <title>Complete sequence of chromosome of Nitrobacter hamburgensis X14.</title>
        <authorList>
            <consortium name="US DOE Joint Genome Institute"/>
            <person name="Copeland A."/>
            <person name="Lucas S."/>
            <person name="Lapidus A."/>
            <person name="Barry K."/>
            <person name="Detter J.C."/>
            <person name="Glavina del Rio T."/>
            <person name="Hammon N."/>
            <person name="Israni S."/>
            <person name="Dalin E."/>
            <person name="Tice H."/>
            <person name="Pitluck S."/>
            <person name="Chain P."/>
            <person name="Malfatti S."/>
            <person name="Shin M."/>
            <person name="Vergez L."/>
            <person name="Schmutz J."/>
            <person name="Larimer F."/>
            <person name="Land M."/>
            <person name="Hauser L."/>
            <person name="Kyrpides N."/>
            <person name="Ivanova N."/>
            <person name="Ward B."/>
            <person name="Arp D."/>
            <person name="Klotz M."/>
            <person name="Stein L."/>
            <person name="O'Mullan G."/>
            <person name="Starkenburg S."/>
            <person name="Sayavedra L."/>
            <person name="Poret-Peterson A.T."/>
            <person name="Gentry M.E."/>
            <person name="Bruce D."/>
            <person name="Richardson P."/>
        </authorList>
    </citation>
    <scope>NUCLEOTIDE SEQUENCE [LARGE SCALE GENOMIC DNA]</scope>
    <source>
        <strain>DSM 10229 / NCIMB 13809 / X14</strain>
    </source>
</reference>
<organism>
    <name type="scientific">Nitrobacter hamburgensis (strain DSM 10229 / NCIMB 13809 / X14)</name>
    <dbReference type="NCBI Taxonomy" id="323097"/>
    <lineage>
        <taxon>Bacteria</taxon>
        <taxon>Pseudomonadati</taxon>
        <taxon>Pseudomonadota</taxon>
        <taxon>Alphaproteobacteria</taxon>
        <taxon>Hyphomicrobiales</taxon>
        <taxon>Nitrobacteraceae</taxon>
        <taxon>Nitrobacter</taxon>
    </lineage>
</organism>
<proteinExistence type="inferred from homology"/>
<keyword id="KW-0997">Cell inner membrane</keyword>
<keyword id="KW-1003">Cell membrane</keyword>
<keyword id="KW-0472">Membrane</keyword>
<keyword id="KW-0520">NAD</keyword>
<keyword id="KW-0874">Quinone</keyword>
<keyword id="KW-1185">Reference proteome</keyword>
<keyword id="KW-1278">Translocase</keyword>
<keyword id="KW-0813">Transport</keyword>
<keyword id="KW-0830">Ubiquinone</keyword>
<evidence type="ECO:0000255" key="1">
    <source>
        <dbReference type="HAMAP-Rule" id="MF_01358"/>
    </source>
</evidence>
<sequence length="402" mass="45209">MTEALGTETPGMRNFTINFGPQHPAAHGVLRLVLELDGEVVERVDPHIGLLHRGTEKLIEQKTYLQAIPYFDRLDYVAPMNQEHAFCLAAEKLLGIAVPRRGQLIRVLYCEIGRILSHLLNVTTQALDVGALTPPLWGFEEREKLMMFYERASGSRMHAAYFRIGGVHQDLPPKLIDDIDAWCDPFLQVVADLDALLTDSRIFKQRNVDIGVVSLKQAWEWGFSGVMVRGSGAAWDLRKAQPYECYAEMDFDIPIGKNGDCYDRYLIRMEEMRQSARIMKQCIAKLRAADGQGPVAVEDNKIFPPRRAEMKRSMEALIHHFKLYTEGFRVPAGEVYAAVEAPKGEFGVFLVSDGSNKPYKCKIRAPGFAHLQAMDFICRGHLLADVSAILGSLDIVFGEVDR</sequence>
<comment type="function">
    <text evidence="1">NDH-1 shuttles electrons from NADH, via FMN and iron-sulfur (Fe-S) centers, to quinones in the respiratory chain. The immediate electron acceptor for the enzyme in this species is believed to be ubiquinone. Couples the redox reaction to proton translocation (for every two electrons transferred, four hydrogen ions are translocated across the cytoplasmic membrane), and thus conserves the redox energy in a proton gradient.</text>
</comment>
<comment type="catalytic activity">
    <reaction evidence="1">
        <text>a quinone + NADH + 5 H(+)(in) = a quinol + NAD(+) + 4 H(+)(out)</text>
        <dbReference type="Rhea" id="RHEA:57888"/>
        <dbReference type="ChEBI" id="CHEBI:15378"/>
        <dbReference type="ChEBI" id="CHEBI:24646"/>
        <dbReference type="ChEBI" id="CHEBI:57540"/>
        <dbReference type="ChEBI" id="CHEBI:57945"/>
        <dbReference type="ChEBI" id="CHEBI:132124"/>
    </reaction>
</comment>
<comment type="subunit">
    <text evidence="1">NDH-1 is composed of 14 different subunits. Subunits NuoB, C, D, E, F, and G constitute the peripheral sector of the complex.</text>
</comment>
<comment type="subcellular location">
    <subcellularLocation>
        <location evidence="1">Cell inner membrane</location>
        <topology evidence="1">Peripheral membrane protein</topology>
        <orientation evidence="1">Cytoplasmic side</orientation>
    </subcellularLocation>
</comment>
<comment type="similarity">
    <text evidence="1">Belongs to the complex I 49 kDa subunit family.</text>
</comment>